<dbReference type="EMBL" id="AB060290">
    <property type="protein sequence ID" value="BAB69957.1"/>
    <property type="molecule type" value="mRNA"/>
</dbReference>
<dbReference type="RefSeq" id="XP_052506345.1">
    <property type="nucleotide sequence ID" value="XM_052650385.1"/>
</dbReference>
<dbReference type="SMR" id="Q95M08"/>
<dbReference type="GlyCosmos" id="Q95M08">
    <property type="glycosylation" value="2 sites, No reported glycans"/>
</dbReference>
<dbReference type="GeneID" id="128058006"/>
<dbReference type="GO" id="GO:0005794">
    <property type="term" value="C:Golgi apparatus"/>
    <property type="evidence" value="ECO:0007669"/>
    <property type="project" value="UniProtKB-SubCell"/>
</dbReference>
<dbReference type="GO" id="GO:0005886">
    <property type="term" value="C:plasma membrane"/>
    <property type="evidence" value="ECO:0007669"/>
    <property type="project" value="UniProtKB-SubCell"/>
</dbReference>
<dbReference type="GO" id="GO:0098552">
    <property type="term" value="C:side of membrane"/>
    <property type="evidence" value="ECO:0007669"/>
    <property type="project" value="UniProtKB-KW"/>
</dbReference>
<dbReference type="GO" id="GO:0005507">
    <property type="term" value="F:copper ion binding"/>
    <property type="evidence" value="ECO:0000250"/>
    <property type="project" value="UniProtKB"/>
</dbReference>
<dbReference type="GO" id="GO:0051260">
    <property type="term" value="P:protein homooligomerization"/>
    <property type="evidence" value="ECO:0007669"/>
    <property type="project" value="InterPro"/>
</dbReference>
<dbReference type="FunFam" id="1.10.790.10:FF:000001">
    <property type="entry name" value="Major prion protein"/>
    <property type="match status" value="1"/>
</dbReference>
<dbReference type="Gene3D" id="1.10.790.10">
    <property type="entry name" value="Prion/Doppel protein, beta-ribbon domain"/>
    <property type="match status" value="1"/>
</dbReference>
<dbReference type="InterPro" id="IPR000817">
    <property type="entry name" value="Prion"/>
</dbReference>
<dbReference type="InterPro" id="IPR036924">
    <property type="entry name" value="Prion/Doppel_b-ribbon_dom_sf"/>
</dbReference>
<dbReference type="InterPro" id="IPR022416">
    <property type="entry name" value="Prion/Doppel_prot_b-ribbon_dom"/>
</dbReference>
<dbReference type="InterPro" id="IPR020949">
    <property type="entry name" value="Prion_copper_b_octapeptide"/>
</dbReference>
<dbReference type="InterPro" id="IPR025860">
    <property type="entry name" value="Prion_N"/>
</dbReference>
<dbReference type="PANTHER" id="PTHR15506">
    <property type="entry name" value="DOPPEL PRION"/>
    <property type="match status" value="1"/>
</dbReference>
<dbReference type="PANTHER" id="PTHR15506:SF2">
    <property type="entry name" value="MAJOR PRION PROTEIN"/>
    <property type="match status" value="1"/>
</dbReference>
<dbReference type="Pfam" id="PF00377">
    <property type="entry name" value="Prion"/>
    <property type="match status" value="1"/>
</dbReference>
<dbReference type="Pfam" id="PF11587">
    <property type="entry name" value="Prion_bPrPp"/>
    <property type="match status" value="1"/>
</dbReference>
<dbReference type="Pfam" id="PF03991">
    <property type="entry name" value="Prion_octapep"/>
    <property type="match status" value="1"/>
</dbReference>
<dbReference type="PRINTS" id="PR00341">
    <property type="entry name" value="PRION"/>
</dbReference>
<dbReference type="SMART" id="SM00157">
    <property type="entry name" value="PRP"/>
    <property type="match status" value="1"/>
</dbReference>
<dbReference type="SUPFAM" id="SSF54098">
    <property type="entry name" value="Prion-like"/>
    <property type="match status" value="1"/>
</dbReference>
<dbReference type="PROSITE" id="PS00291">
    <property type="entry name" value="PRION_1"/>
    <property type="match status" value="1"/>
</dbReference>
<dbReference type="PROSITE" id="PS00706">
    <property type="entry name" value="PRION_2"/>
    <property type="match status" value="1"/>
</dbReference>
<keyword id="KW-0034">Amyloid</keyword>
<keyword id="KW-1003">Cell membrane</keyword>
<keyword id="KW-0186">Copper</keyword>
<keyword id="KW-1015">Disulfide bond</keyword>
<keyword id="KW-0325">Glycoprotein</keyword>
<keyword id="KW-0333">Golgi apparatus</keyword>
<keyword id="KW-0336">GPI-anchor</keyword>
<keyword id="KW-0449">Lipoprotein</keyword>
<keyword id="KW-0472">Membrane</keyword>
<keyword id="KW-0479">Metal-binding</keyword>
<keyword id="KW-0640">Prion</keyword>
<keyword id="KW-0677">Repeat</keyword>
<keyword id="KW-0732">Signal</keyword>
<keyword id="KW-0862">Zinc</keyword>
<evidence type="ECO:0000250" key="1"/>
<evidence type="ECO:0000250" key="2">
    <source>
        <dbReference type="UniProtKB" id="P04156"/>
    </source>
</evidence>
<evidence type="ECO:0000250" key="3">
    <source>
        <dbReference type="UniProtKB" id="P04273"/>
    </source>
</evidence>
<evidence type="ECO:0000250" key="4">
    <source>
        <dbReference type="UniProtKB" id="P04925"/>
    </source>
</evidence>
<evidence type="ECO:0000255" key="5"/>
<evidence type="ECO:0000256" key="6">
    <source>
        <dbReference type="SAM" id="MobiDB-lite"/>
    </source>
</evidence>
<evidence type="ECO:0000305" key="7"/>
<protein>
    <recommendedName>
        <fullName>Major prion protein</fullName>
        <shortName>PrP</shortName>
    </recommendedName>
    <cdAntigenName>CD230</cdAntigenName>
</protein>
<feature type="signal peptide" evidence="1">
    <location>
        <begin position="1"/>
        <end position="24"/>
    </location>
</feature>
<feature type="chain" id="PRO_0000025633" description="Major prion protein">
    <location>
        <begin position="25"/>
        <end position="233"/>
    </location>
</feature>
<feature type="propeptide" id="PRO_0000025634" description="Removed in mature form" evidence="5">
    <location>
        <begin position="234"/>
        <end position="256"/>
    </location>
</feature>
<feature type="repeat" description="1">
    <location>
        <begin position="54"/>
        <end position="62"/>
    </location>
</feature>
<feature type="repeat" description="2">
    <location>
        <begin position="63"/>
        <end position="70"/>
    </location>
</feature>
<feature type="repeat" description="3">
    <location>
        <begin position="71"/>
        <end position="78"/>
    </location>
</feature>
<feature type="repeat" description="4">
    <location>
        <begin position="79"/>
        <end position="86"/>
    </location>
</feature>
<feature type="repeat" description="5">
    <location>
        <begin position="87"/>
        <end position="95"/>
    </location>
</feature>
<feature type="region of interest" description="Interaction with GRB2, ERI3 and SYN1" evidence="4">
    <location>
        <begin position="25"/>
        <end position="233"/>
    </location>
</feature>
<feature type="region of interest" description="Disordered" evidence="6">
    <location>
        <begin position="28"/>
        <end position="110"/>
    </location>
</feature>
<feature type="region of interest" description="5 X 8 AA tandem repeats of P-H-G-G-G-W-G-Q">
    <location>
        <begin position="54"/>
        <end position="95"/>
    </location>
</feature>
<feature type="compositionally biased region" description="Gly residues" evidence="6">
    <location>
        <begin position="55"/>
        <end position="97"/>
    </location>
</feature>
<feature type="binding site" evidence="2">
    <location>
        <position position="64"/>
    </location>
    <ligand>
        <name>Cu(2+)</name>
        <dbReference type="ChEBI" id="CHEBI:29036"/>
        <label>1</label>
    </ligand>
</feature>
<feature type="binding site" evidence="2">
    <location>
        <position position="65"/>
    </location>
    <ligand>
        <name>Cu(2+)</name>
        <dbReference type="ChEBI" id="CHEBI:29036"/>
        <label>1</label>
    </ligand>
</feature>
<feature type="binding site" evidence="2">
    <location>
        <position position="66"/>
    </location>
    <ligand>
        <name>Cu(2+)</name>
        <dbReference type="ChEBI" id="CHEBI:29036"/>
        <label>1</label>
    </ligand>
</feature>
<feature type="binding site" evidence="2">
    <location>
        <position position="72"/>
    </location>
    <ligand>
        <name>Cu(2+)</name>
        <dbReference type="ChEBI" id="CHEBI:29036"/>
        <label>2</label>
    </ligand>
</feature>
<feature type="binding site" evidence="2">
    <location>
        <position position="73"/>
    </location>
    <ligand>
        <name>Cu(2+)</name>
        <dbReference type="ChEBI" id="CHEBI:29036"/>
        <label>2</label>
    </ligand>
</feature>
<feature type="binding site" evidence="2">
    <location>
        <position position="74"/>
    </location>
    <ligand>
        <name>Cu(2+)</name>
        <dbReference type="ChEBI" id="CHEBI:29036"/>
        <label>2</label>
    </ligand>
</feature>
<feature type="binding site" evidence="2">
    <location>
        <position position="80"/>
    </location>
    <ligand>
        <name>Cu(2+)</name>
        <dbReference type="ChEBI" id="CHEBI:29036"/>
        <label>3</label>
    </ligand>
</feature>
<feature type="binding site" evidence="2">
    <location>
        <position position="81"/>
    </location>
    <ligand>
        <name>Cu(2+)</name>
        <dbReference type="ChEBI" id="CHEBI:29036"/>
        <label>3</label>
    </ligand>
</feature>
<feature type="binding site" evidence="2">
    <location>
        <position position="82"/>
    </location>
    <ligand>
        <name>Cu(2+)</name>
        <dbReference type="ChEBI" id="CHEBI:29036"/>
        <label>3</label>
    </ligand>
</feature>
<feature type="binding site" evidence="2">
    <location>
        <position position="88"/>
    </location>
    <ligand>
        <name>Cu(2+)</name>
        <dbReference type="ChEBI" id="CHEBI:29036"/>
        <label>4</label>
    </ligand>
</feature>
<feature type="binding site" evidence="2">
    <location>
        <position position="90"/>
    </location>
    <ligand>
        <name>Cu(2+)</name>
        <dbReference type="ChEBI" id="CHEBI:29036"/>
        <label>4</label>
    </ligand>
</feature>
<feature type="binding site" evidence="2">
    <location>
        <position position="91"/>
    </location>
    <ligand>
        <name>Cu(2+)</name>
        <dbReference type="ChEBI" id="CHEBI:29036"/>
        <label>4</label>
    </ligand>
</feature>
<feature type="lipid moiety-binding region" description="GPI-anchor amidated alanine" evidence="5">
    <location>
        <position position="233"/>
    </location>
</feature>
<feature type="glycosylation site" description="N-linked (GlcNAc...) asparagine" evidence="7">
    <location>
        <position position="184"/>
    </location>
</feature>
<feature type="glycosylation site" description="N-linked (GlcNAc...) asparagine" evidence="7">
    <location>
        <position position="200"/>
    </location>
</feature>
<feature type="disulfide bond" evidence="3">
    <location>
        <begin position="182"/>
        <end position="217"/>
    </location>
</feature>
<accession>Q95M08</accession>
<name>PRIO_BUDTA</name>
<sequence length="256" mass="27860">MVKSHIGSWILVLFVAMWSDVGLCKKRPKPGGGWNTGGSRYPGQGSPGGNRYPPQGGGGWGQPHGGGWGQPHGGGWGQPHGGGWGQPHGGGGWGQGGSHSQWNKPSKPKTNMKHVAGAAAAGAVVGGLGGYMLGSAMSRPLIHFGSDYEDRYYRENMYRYPNQVYYRPVDQYSNQNNFVHDCVNITVKQHTVTTTTKGENFTETDIKIMERVVEQMCITQYQRESQAYYQRGASVILFSSPPVILLISFLIFLIVG</sequence>
<organism>
    <name type="scientific">Budorcas taxicolor</name>
    <name type="common">Golden takin</name>
    <dbReference type="NCBI Taxonomy" id="37181"/>
    <lineage>
        <taxon>Eukaryota</taxon>
        <taxon>Metazoa</taxon>
        <taxon>Chordata</taxon>
        <taxon>Craniata</taxon>
        <taxon>Vertebrata</taxon>
        <taxon>Euteleostomi</taxon>
        <taxon>Mammalia</taxon>
        <taxon>Eutheria</taxon>
        <taxon>Laurasiatheria</taxon>
        <taxon>Artiodactyla</taxon>
        <taxon>Ruminantia</taxon>
        <taxon>Pecora</taxon>
        <taxon>Bovidae</taxon>
        <taxon>Caprinae</taxon>
        <taxon>Budorcas</taxon>
    </lineage>
</organism>
<comment type="function">
    <text evidence="2 4">Its primary physiological function is unclear. Has cytoprotective activity against internal or environmental stresses. May play a role in neuronal development and synaptic plasticity. May be required for neuronal myelin sheath maintenance. May play a role in iron uptake and iron homeostasis. Soluble oligomers are toxic to cultured neuroblastoma cells and induce apoptosis (in vitro). Association with GPC1 (via its heparan sulfate chains) targets PRNP to lipid rafts. Also provides Cu(2+) or Zn(2+) for the ascorbate-mediated GPC1 deaminase degradation of its heparan sulfate side chains (By similarity).</text>
</comment>
<comment type="subunit">
    <text evidence="2 4">Monomer and homodimer. Has a tendency to aggregate into amyloid fibrils containing a cross-beta spine, formed by a steric zipper of superposed beta-strands. Soluble oligomers may represent an intermediate stage on the path to fibril formation. Copper binding may promote oligomerization. Interacts with GRB2, APP, ERI3/PRNPIP and SYN1. Mislocalized cytosolically exposed PrP interacts with MGRN1; this interaction alters MGRN1 subcellular location and causes lysosomal enlargement. Interacts with KIAA1191.</text>
</comment>
<comment type="subcellular location">
    <subcellularLocation>
        <location evidence="2">Cell membrane</location>
        <topology evidence="2">Lipid-anchor</topology>
        <topology evidence="2">GPI-anchor</topology>
    </subcellularLocation>
    <subcellularLocation>
        <location evidence="4">Golgi apparatus</location>
    </subcellularLocation>
    <text evidence="2">Targeted to lipid rafts via association with the heparan sulfate chains of GPC1. Colocates, in the presence of Cu(2+), to vesicles in para- and perinuclear regions, where both proteins undergo internalization. Heparin displaces PRNP from lipid rafts and promotes endocytosis.</text>
</comment>
<comment type="domain">
    <text evidence="2">The normal, monomeric form has a mainly alpha-helical structure. The disease-associated, protease-resistant form forms amyloid fibrils containing a cross-beta spine, formed by a steric zipper of superposed beta-strands. Disease mutations may favor intermolecular contacts via short beta strands, and may thereby trigger oligomerization.</text>
</comment>
<comment type="domain">
    <text evidence="2">Contains an N-terminal region composed of octamer repeats. At low copper concentrations, the sidechains of His residues from three or four repeats contribute to the binding of a single copper ion. Alternatively, a copper ion can be bound by interaction with the sidechain and backbone amide nitrogen of a single His residue. The observed copper binding stoichiometry suggests that two repeat regions cooperate to stabilize the binding of a single copper ion. At higher copper concentrations, each octamer can bind one copper ion by interactions with the His sidechain and Gly backbone atoms. A mixture of binding types may occur, especially in the case of octamer repeat expansion. Copper binding may stabilize the conformation of this region and may promote oligomerization.</text>
</comment>
<comment type="disease">
    <text evidence="7">Found in high quantity in the brain of humans and animals infected with degenerative neurological diseases such as kuru, Creutzfeldt-Jakob disease (CJD), Gerstmann-Straussler syndrome (GSS), scrapie, bovine spongiform encephalopathy (BSE), transmissible mink encephalopathy (TME), etc.</text>
</comment>
<comment type="similarity">
    <text evidence="7">Belongs to the prion family.</text>
</comment>
<gene>
    <name type="primary">PRNP</name>
    <name type="synonym">PRP</name>
</gene>
<proteinExistence type="evidence at transcript level"/>
<reference key="1">
    <citation type="journal article" date="2001" name="Intervirology">
        <title>Comparative analysis of the prion protein open reading frame nucleotide sequences of two wild ruminants, the moufflon and golden takin.</title>
        <authorList>
            <person name="Seo S.W."/>
            <person name="Hara K."/>
            <person name="Kubosaki A."/>
            <person name="Nasu Y."/>
            <person name="Nishimura T."/>
            <person name="Saeki K."/>
            <person name="Matsumoto Y."/>
            <person name="Endo H."/>
            <person name="Onodera T."/>
        </authorList>
    </citation>
    <scope>NUCLEOTIDE SEQUENCE [MRNA]</scope>
</reference>